<sequence length="291" mass="30670">MNALFTTAMALRPLDSDPGNPACRVFEGELNEHWTIGPKVHGGAMVALCANAARTAYGAAGQQPMRQPVAVSASFLWAPDPGTMRLVTSIRKRGRRISVADVELTQGGRTAVHAVVTLGEPEHFLPGVDGSGGASGTAPLLSANPVVELMAPEPPEGVVPIGPGHQLAGLVHLGEGCDVRPVLSTLRSATDGRPPVIQLWARPRGVAPDALFALLCGDLSAPVTFAVDRTGWAPTVALTAYLRALPADGWLRVLCTCVEIGQDWFDEDHIVVDRLGRIVVQTRQLAMVPAQ</sequence>
<accession>P64720</accession>
<accession>A0A1R3XW23</accession>
<accession>Q11164</accession>
<accession>X2BF78</accession>
<reference key="1">
    <citation type="journal article" date="2003" name="Proc. Natl. Acad. Sci. U.S.A.">
        <title>The complete genome sequence of Mycobacterium bovis.</title>
        <authorList>
            <person name="Garnier T."/>
            <person name="Eiglmeier K."/>
            <person name="Camus J.-C."/>
            <person name="Medina N."/>
            <person name="Mansoor H."/>
            <person name="Pryor M."/>
            <person name="Duthoy S."/>
            <person name="Grondin S."/>
            <person name="Lacroix C."/>
            <person name="Monsempe C."/>
            <person name="Simon S."/>
            <person name="Harris B."/>
            <person name="Atkin R."/>
            <person name="Doggett J."/>
            <person name="Mayes R."/>
            <person name="Keating L."/>
            <person name="Wheeler P.R."/>
            <person name="Parkhill J."/>
            <person name="Barrell B.G."/>
            <person name="Cole S.T."/>
            <person name="Gordon S.V."/>
            <person name="Hewinson R.G."/>
        </authorList>
    </citation>
    <scope>NUCLEOTIDE SEQUENCE [LARGE SCALE GENOMIC DNA]</scope>
    <source>
        <strain>ATCC BAA-935 / AF2122/97</strain>
    </source>
</reference>
<reference key="2">
    <citation type="journal article" date="2017" name="Genome Announc.">
        <title>Updated reference genome sequence and annotation of Mycobacterium bovis AF2122/97.</title>
        <authorList>
            <person name="Malone K.M."/>
            <person name="Farrell D."/>
            <person name="Stuber T.P."/>
            <person name="Schubert O.T."/>
            <person name="Aebersold R."/>
            <person name="Robbe-Austerman S."/>
            <person name="Gordon S.V."/>
        </authorList>
    </citation>
    <scope>NUCLEOTIDE SEQUENCE [LARGE SCALE GENOMIC DNA]</scope>
    <scope>GENOME REANNOTATION</scope>
    <source>
        <strain>ATCC BAA-935 / AF2122/97</strain>
    </source>
</reference>
<organism>
    <name type="scientific">Mycobacterium bovis (strain ATCC BAA-935 / AF2122/97)</name>
    <dbReference type="NCBI Taxonomy" id="233413"/>
    <lineage>
        <taxon>Bacteria</taxon>
        <taxon>Bacillati</taxon>
        <taxon>Actinomycetota</taxon>
        <taxon>Actinomycetes</taxon>
        <taxon>Mycobacteriales</taxon>
        <taxon>Mycobacteriaceae</taxon>
        <taxon>Mycobacterium</taxon>
        <taxon>Mycobacterium tuberculosis complex</taxon>
    </lineage>
</organism>
<feature type="chain" id="PRO_0000103704" description="Uncharacterized protein Mb0510">
    <location>
        <begin position="1"/>
        <end position="291"/>
    </location>
</feature>
<feature type="domain" description="DAGKc" evidence="1">
    <location>
        <begin position="68"/>
        <end position="205"/>
    </location>
</feature>
<keyword id="KW-1185">Reference proteome</keyword>
<proteinExistence type="predicted"/>
<dbReference type="EMBL" id="LT708304">
    <property type="protein sequence ID" value="SIT99105.1"/>
    <property type="molecule type" value="Genomic_DNA"/>
</dbReference>
<dbReference type="RefSeq" id="NP_854173.1">
    <property type="nucleotide sequence ID" value="NC_002945.3"/>
</dbReference>
<dbReference type="RefSeq" id="WP_003402433.1">
    <property type="nucleotide sequence ID" value="NC_002945.4"/>
</dbReference>
<dbReference type="SMR" id="P64720"/>
<dbReference type="PATRIC" id="fig|233413.5.peg.555"/>
<dbReference type="Proteomes" id="UP000001419">
    <property type="component" value="Chromosome"/>
</dbReference>
<dbReference type="GO" id="GO:0016301">
    <property type="term" value="F:kinase activity"/>
    <property type="evidence" value="ECO:0007669"/>
    <property type="project" value="InterPro"/>
</dbReference>
<dbReference type="Gene3D" id="2.40.160.210">
    <property type="entry name" value="Acyl-CoA thioesterase, double hotdog domain"/>
    <property type="match status" value="1"/>
</dbReference>
<dbReference type="InterPro" id="IPR049450">
    <property type="entry name" value="ACOT8-like_C"/>
</dbReference>
<dbReference type="InterPro" id="IPR042171">
    <property type="entry name" value="Acyl-CoA_hotdog"/>
</dbReference>
<dbReference type="InterPro" id="IPR001206">
    <property type="entry name" value="Diacylglycerol_kinase_cat_dom"/>
</dbReference>
<dbReference type="InterPro" id="IPR029069">
    <property type="entry name" value="HotDog_dom_sf"/>
</dbReference>
<dbReference type="InterPro" id="IPR052389">
    <property type="entry name" value="Sec_Metab_Biosynth-Assoc"/>
</dbReference>
<dbReference type="InterPro" id="IPR049449">
    <property type="entry name" value="TesB_ACOT8-like_N"/>
</dbReference>
<dbReference type="PANTHER" id="PTHR38110">
    <property type="entry name" value="CHROMOSOME 23, WHOLE GENOME SHOTGUN SEQUENCE"/>
    <property type="match status" value="1"/>
</dbReference>
<dbReference type="PANTHER" id="PTHR38110:SF1">
    <property type="entry name" value="THIOESTERASE DOMAIN-CONTAINING PROTEIN"/>
    <property type="match status" value="1"/>
</dbReference>
<dbReference type="Pfam" id="PF13622">
    <property type="entry name" value="4HBT_3"/>
    <property type="match status" value="1"/>
</dbReference>
<dbReference type="Pfam" id="PF20789">
    <property type="entry name" value="4HBT_3C"/>
    <property type="match status" value="1"/>
</dbReference>
<dbReference type="SMART" id="SM00046">
    <property type="entry name" value="DAGKc"/>
    <property type="match status" value="1"/>
</dbReference>
<dbReference type="SUPFAM" id="SSF54637">
    <property type="entry name" value="Thioesterase/thiol ester dehydrase-isomerase"/>
    <property type="match status" value="2"/>
</dbReference>
<dbReference type="PROSITE" id="PS50146">
    <property type="entry name" value="DAGK"/>
    <property type="match status" value="1"/>
</dbReference>
<protein>
    <recommendedName>
        <fullName>Uncharacterized protein Mb0510</fullName>
    </recommendedName>
</protein>
<gene>
    <name type="ordered locus">BQ2027_MB0510</name>
</gene>
<evidence type="ECO:0000255" key="1">
    <source>
        <dbReference type="PROSITE-ProRule" id="PRU00783"/>
    </source>
</evidence>
<name>Y510_MYCBO</name>